<keyword id="KW-0025">Alternative splicing</keyword>
<keyword id="KW-0131">Cell cycle</keyword>
<keyword id="KW-0132">Cell division</keyword>
<keyword id="KW-0137">Centromere</keyword>
<keyword id="KW-0158">Chromosome</keyword>
<keyword id="KW-0175">Coiled coil</keyword>
<keyword id="KW-0995">Kinetochore</keyword>
<keyword id="KW-0498">Mitosis</keyword>
<keyword id="KW-0539">Nucleus</keyword>
<keyword id="KW-0597">Phosphoprotein</keyword>
<keyword id="KW-1185">Reference proteome</keyword>
<protein>
    <recommendedName>
        <fullName>Kinetochore protein Spc25</fullName>
    </recommendedName>
</protein>
<evidence type="ECO:0000250" key="1"/>
<evidence type="ECO:0000250" key="2">
    <source>
        <dbReference type="UniProtKB" id="Q9HBM1"/>
    </source>
</evidence>
<evidence type="ECO:0000255" key="3"/>
<evidence type="ECO:0000303" key="4">
    <source>
    </source>
</evidence>
<evidence type="ECO:0000305" key="5"/>
<sequence length="226" mass="26457">MGEDELALLNQSINEFGDKFRNRLDDNHSQVLGLRDAFKDSMKAFSEKMSLKLKEEERMTEMILEYKNQLCKQNKLIQEKKENVLKMIAEVKGKEQESEELTAKIQELKEEYARKRETISTANKANEERLKGLQKSADLYRDYLGLEIRKIHGNKLQFIFTSIDPKNPESPYMFSMSINEAKEYEVYDSSPHLECLAEFQEKVRKTNNFSAFLANIRKAFIAKVHN</sequence>
<accession>Q3UA16</accession>
<accession>Q9D021</accession>
<accession>Q9D1K6</accession>
<name>SPC25_MOUSE</name>
<proteinExistence type="evidence at transcript level"/>
<gene>
    <name type="primary">Spc25</name>
    <name type="synonym">Spbc25</name>
</gene>
<comment type="function">
    <text evidence="2">Acts as a component of the essential kinetochore-associated NDC80 complex, which is required for chromosome segregation and spindle checkpoint activity. Required for kinetochore integrity and the organization of stable microtubule binding sites in the outer plate of the kinetochore. The NDC80 complex synergistically enhances the affinity of the SKA1 complex for microtubules and may allow the NDC80 complex to track depolymerizing microtubules.</text>
</comment>
<comment type="subunit">
    <text evidence="1">Component of the NDC80 complex, which consists of NDC80/HEC1, CDCA1, SPBC24 and SPBC25. The NDC80 complex is formed by two subcomplexes composed of NDC80/HEC1-CDCA1 and SPBC24-SPBC25. Each subcomplex is formed by parallel interactions through the coiled-coil domains of individual subunits. Formation of a tetrameric complex is mediated by interactions between the C-terminal regions of both subunits of the NDC80/HEC1-CDCA1 subcomplex and the N-terminal regions of both subunits of the SPBC24-SPBC25 complex. The tetrameric NDC80 complex has an elongated rod-like structure with globular domains at either end (By similarity).</text>
</comment>
<comment type="subcellular location">
    <subcellularLocation>
        <location evidence="2">Nucleus</location>
    </subcellularLocation>
    <subcellularLocation>
        <location evidence="2">Chromosome</location>
        <location evidence="2">Centromere</location>
        <location evidence="2">Kinetochore</location>
    </subcellularLocation>
    <text evidence="2">Localizes to kinetochores from late prophase to anaphase. Localizes specifically to the outer plate of the kinetochore.</text>
</comment>
<comment type="alternative products">
    <event type="alternative splicing"/>
    <isoform>
        <id>Q3UA16-1</id>
        <name>1</name>
        <sequence type="displayed"/>
    </isoform>
    <isoform>
        <id>Q3UA16-2</id>
        <name>2</name>
        <sequence type="described" ref="VSP_020518"/>
    </isoform>
    <isoform>
        <id>Q3UA16-3</id>
        <name>3</name>
        <sequence type="described" ref="VSP_020519"/>
    </isoform>
</comment>
<comment type="similarity">
    <text evidence="5">Belongs to the SPC25 family.</text>
</comment>
<feature type="chain" id="PRO_0000249566" description="Kinetochore protein Spc25">
    <location>
        <begin position="1"/>
        <end position="226"/>
    </location>
</feature>
<feature type="region of interest" description="Interaction with the N-terminus of SPBC24" evidence="1">
    <location>
        <begin position="1"/>
        <end position="146"/>
    </location>
</feature>
<feature type="region of interest" description="Interaction with the NDC80-NUF2 subcomplex" evidence="1">
    <location>
        <begin position="1"/>
        <end position="58"/>
    </location>
</feature>
<feature type="region of interest" description="Interaction with the C-terminus of SPBC24" evidence="1">
    <location>
        <begin position="147"/>
        <end position="226"/>
    </location>
</feature>
<feature type="coiled-coil region" evidence="3">
    <location>
        <begin position="72"/>
        <end position="128"/>
    </location>
</feature>
<feature type="modified residue" description="Phosphoserine" evidence="2">
    <location>
        <position position="12"/>
    </location>
</feature>
<feature type="splice variant" id="VSP_020518" description="In isoform 2." evidence="4">
    <location>
        <begin position="1"/>
        <end position="48"/>
    </location>
</feature>
<feature type="splice variant" id="VSP_020519" description="In isoform 3." evidence="4">
    <original>NKLQFIFTS</original>
    <variation>KFLALLCRG</variation>
    <location>
        <begin position="154"/>
        <end position="162"/>
    </location>
</feature>
<dbReference type="EMBL" id="AK003408">
    <property type="protein sequence ID" value="BAB22772.1"/>
    <property type="molecule type" value="mRNA"/>
</dbReference>
<dbReference type="EMBL" id="AK011893">
    <property type="protein sequence ID" value="BAB27900.1"/>
    <property type="molecule type" value="mRNA"/>
</dbReference>
<dbReference type="EMBL" id="AK146727">
    <property type="protein sequence ID" value="BAE27390.1"/>
    <property type="molecule type" value="mRNA"/>
</dbReference>
<dbReference type="EMBL" id="AK151554">
    <property type="protein sequence ID" value="BAE30499.1"/>
    <property type="molecule type" value="mRNA"/>
</dbReference>
<dbReference type="EMBL" id="BC027121">
    <property type="protein sequence ID" value="AAH27121.2"/>
    <property type="molecule type" value="mRNA"/>
</dbReference>
<dbReference type="EMBL" id="BC033605">
    <property type="protein sequence ID" value="AAH33605.2"/>
    <property type="molecule type" value="mRNA"/>
</dbReference>
<dbReference type="CCDS" id="CCDS16088.1">
    <molecule id="Q3UA16-2"/>
</dbReference>
<dbReference type="CCDS" id="CCDS57174.1">
    <molecule id="Q3UA16-1"/>
</dbReference>
<dbReference type="RefSeq" id="NP_001186052.1">
    <molecule id="Q3UA16-1"/>
    <property type="nucleotide sequence ID" value="NM_001199123.2"/>
</dbReference>
<dbReference type="RefSeq" id="NP_001186053.1">
    <molecule id="Q3UA16-1"/>
    <property type="nucleotide sequence ID" value="NM_001199124.2"/>
</dbReference>
<dbReference type="RefSeq" id="NP_001292729.1">
    <molecule id="Q3UA16-1"/>
    <property type="nucleotide sequence ID" value="NM_001305800.1"/>
</dbReference>
<dbReference type="RefSeq" id="NP_079841.1">
    <molecule id="Q3UA16-2"/>
    <property type="nucleotide sequence ID" value="NM_025565.4"/>
</dbReference>
<dbReference type="RefSeq" id="XP_006500066.1">
    <molecule id="Q3UA16-1"/>
    <property type="nucleotide sequence ID" value="XM_006500003.4"/>
</dbReference>
<dbReference type="RefSeq" id="XP_036018343.1">
    <molecule id="Q3UA16-1"/>
    <property type="nucleotide sequence ID" value="XM_036162450.1"/>
</dbReference>
<dbReference type="SMR" id="Q3UA16"/>
<dbReference type="BioGRID" id="211477">
    <property type="interactions" value="1"/>
</dbReference>
<dbReference type="ComplexPortal" id="CPX-551">
    <property type="entry name" value="Ndc80 complex"/>
</dbReference>
<dbReference type="FunCoup" id="Q3UA16">
    <property type="interactions" value="332"/>
</dbReference>
<dbReference type="STRING" id="10090.ENSMUSP00000107939"/>
<dbReference type="iPTMnet" id="Q3UA16"/>
<dbReference type="PhosphoSitePlus" id="Q3UA16"/>
<dbReference type="PaxDb" id="10090-ENSMUSP00000107939"/>
<dbReference type="PeptideAtlas" id="Q3UA16"/>
<dbReference type="ProteomicsDB" id="257552">
    <molecule id="Q3UA16-1"/>
</dbReference>
<dbReference type="ProteomicsDB" id="257553">
    <molecule id="Q3UA16-2"/>
</dbReference>
<dbReference type="ProteomicsDB" id="257554">
    <molecule id="Q3UA16-3"/>
</dbReference>
<dbReference type="Pumba" id="Q3UA16"/>
<dbReference type="Antibodypedia" id="33800">
    <property type="antibodies" value="215 antibodies from 23 providers"/>
</dbReference>
<dbReference type="DNASU" id="66442"/>
<dbReference type="Ensembl" id="ENSMUST00000005365.15">
    <molecule id="Q3UA16-1"/>
    <property type="protein sequence ID" value="ENSMUSP00000005365.9"/>
    <property type="gene ID" value="ENSMUSG00000005233.17"/>
</dbReference>
<dbReference type="Ensembl" id="ENSMUST00000112320.8">
    <molecule id="Q3UA16-1"/>
    <property type="protein sequence ID" value="ENSMUSP00000107939.2"/>
    <property type="gene ID" value="ENSMUSG00000005233.17"/>
</dbReference>
<dbReference type="Ensembl" id="ENSMUST00000167875.9">
    <molecule id="Q3UA16-2"/>
    <property type="protein sequence ID" value="ENSMUSP00000128039.3"/>
    <property type="gene ID" value="ENSMUSG00000005233.17"/>
</dbReference>
<dbReference type="GeneID" id="66442"/>
<dbReference type="KEGG" id="mmu:66442"/>
<dbReference type="UCSC" id="uc008jxu.3">
    <molecule id="Q3UA16-1"/>
    <property type="organism name" value="mouse"/>
</dbReference>
<dbReference type="UCSC" id="uc008jxx.3">
    <molecule id="Q3UA16-3"/>
    <property type="organism name" value="mouse"/>
</dbReference>
<dbReference type="AGR" id="MGI:1913692"/>
<dbReference type="CTD" id="57405"/>
<dbReference type="MGI" id="MGI:1913692">
    <property type="gene designation" value="Spc25"/>
</dbReference>
<dbReference type="VEuPathDB" id="HostDB:ENSMUSG00000005233"/>
<dbReference type="eggNOG" id="KOG4657">
    <property type="taxonomic scope" value="Eukaryota"/>
</dbReference>
<dbReference type="GeneTree" id="ENSGT00390000002220"/>
<dbReference type="HOGENOM" id="CLU_102420_0_0_1"/>
<dbReference type="InParanoid" id="Q3UA16"/>
<dbReference type="OMA" id="KNINEFW"/>
<dbReference type="OrthoDB" id="6353017at2759"/>
<dbReference type="PhylomeDB" id="Q3UA16"/>
<dbReference type="TreeFam" id="TF332941"/>
<dbReference type="Reactome" id="R-MMU-141444">
    <property type="pathway name" value="Amplification of signal from unattached kinetochores via a MAD2 inhibitory signal"/>
</dbReference>
<dbReference type="Reactome" id="R-MMU-2467813">
    <property type="pathway name" value="Separation of Sister Chromatids"/>
</dbReference>
<dbReference type="Reactome" id="R-MMU-2500257">
    <property type="pathway name" value="Resolution of Sister Chromatid Cohesion"/>
</dbReference>
<dbReference type="Reactome" id="R-MMU-5663220">
    <property type="pathway name" value="RHO GTPases Activate Formins"/>
</dbReference>
<dbReference type="Reactome" id="R-MMU-68877">
    <property type="pathway name" value="Mitotic Prometaphase"/>
</dbReference>
<dbReference type="Reactome" id="R-MMU-9648025">
    <property type="pathway name" value="EML4 and NUDC in mitotic spindle formation"/>
</dbReference>
<dbReference type="BioGRID-ORCS" id="66442">
    <property type="hits" value="23 hits in 58 CRISPR screens"/>
</dbReference>
<dbReference type="ChiTaRS" id="Spc25">
    <property type="organism name" value="mouse"/>
</dbReference>
<dbReference type="PRO" id="PR:Q3UA16"/>
<dbReference type="Proteomes" id="UP000000589">
    <property type="component" value="Chromosome 2"/>
</dbReference>
<dbReference type="RNAct" id="Q3UA16">
    <property type="molecule type" value="protein"/>
</dbReference>
<dbReference type="Bgee" id="ENSMUSG00000005233">
    <property type="expression patterns" value="Expressed in ear vesicle and 211 other cell types or tissues"/>
</dbReference>
<dbReference type="ExpressionAtlas" id="Q3UA16">
    <property type="expression patterns" value="baseline and differential"/>
</dbReference>
<dbReference type="GO" id="GO:0005829">
    <property type="term" value="C:cytosol"/>
    <property type="evidence" value="ECO:0007669"/>
    <property type="project" value="Ensembl"/>
</dbReference>
<dbReference type="GO" id="GO:0000776">
    <property type="term" value="C:kinetochore"/>
    <property type="evidence" value="ECO:0000250"/>
    <property type="project" value="UniProtKB"/>
</dbReference>
<dbReference type="GO" id="GO:0031262">
    <property type="term" value="C:Ndc80 complex"/>
    <property type="evidence" value="ECO:0000250"/>
    <property type="project" value="UniProtKB"/>
</dbReference>
<dbReference type="GO" id="GO:0005634">
    <property type="term" value="C:nucleus"/>
    <property type="evidence" value="ECO:0007669"/>
    <property type="project" value="UniProtKB-SubCell"/>
</dbReference>
<dbReference type="GO" id="GO:0008608">
    <property type="term" value="P:attachment of spindle microtubules to kinetochore"/>
    <property type="evidence" value="ECO:0000266"/>
    <property type="project" value="ComplexPortal"/>
</dbReference>
<dbReference type="GO" id="GO:0051301">
    <property type="term" value="P:cell division"/>
    <property type="evidence" value="ECO:0007669"/>
    <property type="project" value="UniProtKB-KW"/>
</dbReference>
<dbReference type="GO" id="GO:0007059">
    <property type="term" value="P:chromosome segregation"/>
    <property type="evidence" value="ECO:0000250"/>
    <property type="project" value="UniProtKB"/>
</dbReference>
<dbReference type="GO" id="GO:0007094">
    <property type="term" value="P:mitotic spindle assembly checkpoint signaling"/>
    <property type="evidence" value="ECO:0000303"/>
    <property type="project" value="ComplexPortal"/>
</dbReference>
<dbReference type="GO" id="GO:0007052">
    <property type="term" value="P:mitotic spindle organization"/>
    <property type="evidence" value="ECO:0000250"/>
    <property type="project" value="UniProtKB"/>
</dbReference>
<dbReference type="CDD" id="cd23784">
    <property type="entry name" value="RWD_Spc25"/>
    <property type="match status" value="1"/>
</dbReference>
<dbReference type="Gene3D" id="6.10.250.1950">
    <property type="match status" value="1"/>
</dbReference>
<dbReference type="InterPro" id="IPR045143">
    <property type="entry name" value="Spc25"/>
</dbReference>
<dbReference type="InterPro" id="IPR013255">
    <property type="entry name" value="Spc25_C"/>
</dbReference>
<dbReference type="PANTHER" id="PTHR14281:SF0">
    <property type="entry name" value="KINETOCHORE PROTEIN SPC25"/>
    <property type="match status" value="1"/>
</dbReference>
<dbReference type="PANTHER" id="PTHR14281">
    <property type="entry name" value="KINETOCHORE PROTEIN SPC25-RELATED"/>
    <property type="match status" value="1"/>
</dbReference>
<dbReference type="Pfam" id="PF08234">
    <property type="entry name" value="Spindle_Spc25"/>
    <property type="match status" value="1"/>
</dbReference>
<organism>
    <name type="scientific">Mus musculus</name>
    <name type="common">Mouse</name>
    <dbReference type="NCBI Taxonomy" id="10090"/>
    <lineage>
        <taxon>Eukaryota</taxon>
        <taxon>Metazoa</taxon>
        <taxon>Chordata</taxon>
        <taxon>Craniata</taxon>
        <taxon>Vertebrata</taxon>
        <taxon>Euteleostomi</taxon>
        <taxon>Mammalia</taxon>
        <taxon>Eutheria</taxon>
        <taxon>Euarchontoglires</taxon>
        <taxon>Glires</taxon>
        <taxon>Rodentia</taxon>
        <taxon>Myomorpha</taxon>
        <taxon>Muroidea</taxon>
        <taxon>Muridae</taxon>
        <taxon>Murinae</taxon>
        <taxon>Mus</taxon>
        <taxon>Mus</taxon>
    </lineage>
</organism>
<reference key="1">
    <citation type="journal article" date="2005" name="Science">
        <title>The transcriptional landscape of the mammalian genome.</title>
        <authorList>
            <person name="Carninci P."/>
            <person name="Kasukawa T."/>
            <person name="Katayama S."/>
            <person name="Gough J."/>
            <person name="Frith M.C."/>
            <person name="Maeda N."/>
            <person name="Oyama R."/>
            <person name="Ravasi T."/>
            <person name="Lenhard B."/>
            <person name="Wells C."/>
            <person name="Kodzius R."/>
            <person name="Shimokawa K."/>
            <person name="Bajic V.B."/>
            <person name="Brenner S.E."/>
            <person name="Batalov S."/>
            <person name="Forrest A.R."/>
            <person name="Zavolan M."/>
            <person name="Davis M.J."/>
            <person name="Wilming L.G."/>
            <person name="Aidinis V."/>
            <person name="Allen J.E."/>
            <person name="Ambesi-Impiombato A."/>
            <person name="Apweiler R."/>
            <person name="Aturaliya R.N."/>
            <person name="Bailey T.L."/>
            <person name="Bansal M."/>
            <person name="Baxter L."/>
            <person name="Beisel K.W."/>
            <person name="Bersano T."/>
            <person name="Bono H."/>
            <person name="Chalk A.M."/>
            <person name="Chiu K.P."/>
            <person name="Choudhary V."/>
            <person name="Christoffels A."/>
            <person name="Clutterbuck D.R."/>
            <person name="Crowe M.L."/>
            <person name="Dalla E."/>
            <person name="Dalrymple B.P."/>
            <person name="de Bono B."/>
            <person name="Della Gatta G."/>
            <person name="di Bernardo D."/>
            <person name="Down T."/>
            <person name="Engstrom P."/>
            <person name="Fagiolini M."/>
            <person name="Faulkner G."/>
            <person name="Fletcher C.F."/>
            <person name="Fukushima T."/>
            <person name="Furuno M."/>
            <person name="Futaki S."/>
            <person name="Gariboldi M."/>
            <person name="Georgii-Hemming P."/>
            <person name="Gingeras T.R."/>
            <person name="Gojobori T."/>
            <person name="Green R.E."/>
            <person name="Gustincich S."/>
            <person name="Harbers M."/>
            <person name="Hayashi Y."/>
            <person name="Hensch T.K."/>
            <person name="Hirokawa N."/>
            <person name="Hill D."/>
            <person name="Huminiecki L."/>
            <person name="Iacono M."/>
            <person name="Ikeo K."/>
            <person name="Iwama A."/>
            <person name="Ishikawa T."/>
            <person name="Jakt M."/>
            <person name="Kanapin A."/>
            <person name="Katoh M."/>
            <person name="Kawasawa Y."/>
            <person name="Kelso J."/>
            <person name="Kitamura H."/>
            <person name="Kitano H."/>
            <person name="Kollias G."/>
            <person name="Krishnan S.P."/>
            <person name="Kruger A."/>
            <person name="Kummerfeld S.K."/>
            <person name="Kurochkin I.V."/>
            <person name="Lareau L.F."/>
            <person name="Lazarevic D."/>
            <person name="Lipovich L."/>
            <person name="Liu J."/>
            <person name="Liuni S."/>
            <person name="McWilliam S."/>
            <person name="Madan Babu M."/>
            <person name="Madera M."/>
            <person name="Marchionni L."/>
            <person name="Matsuda H."/>
            <person name="Matsuzawa S."/>
            <person name="Miki H."/>
            <person name="Mignone F."/>
            <person name="Miyake S."/>
            <person name="Morris K."/>
            <person name="Mottagui-Tabar S."/>
            <person name="Mulder N."/>
            <person name="Nakano N."/>
            <person name="Nakauchi H."/>
            <person name="Ng P."/>
            <person name="Nilsson R."/>
            <person name="Nishiguchi S."/>
            <person name="Nishikawa S."/>
            <person name="Nori F."/>
            <person name="Ohara O."/>
            <person name="Okazaki Y."/>
            <person name="Orlando V."/>
            <person name="Pang K.C."/>
            <person name="Pavan W.J."/>
            <person name="Pavesi G."/>
            <person name="Pesole G."/>
            <person name="Petrovsky N."/>
            <person name="Piazza S."/>
            <person name="Reed J."/>
            <person name="Reid J.F."/>
            <person name="Ring B.Z."/>
            <person name="Ringwald M."/>
            <person name="Rost B."/>
            <person name="Ruan Y."/>
            <person name="Salzberg S.L."/>
            <person name="Sandelin A."/>
            <person name="Schneider C."/>
            <person name="Schoenbach C."/>
            <person name="Sekiguchi K."/>
            <person name="Semple C.A."/>
            <person name="Seno S."/>
            <person name="Sessa L."/>
            <person name="Sheng Y."/>
            <person name="Shibata Y."/>
            <person name="Shimada H."/>
            <person name="Shimada K."/>
            <person name="Silva D."/>
            <person name="Sinclair B."/>
            <person name="Sperling S."/>
            <person name="Stupka E."/>
            <person name="Sugiura K."/>
            <person name="Sultana R."/>
            <person name="Takenaka Y."/>
            <person name="Taki K."/>
            <person name="Tammoja K."/>
            <person name="Tan S.L."/>
            <person name="Tang S."/>
            <person name="Taylor M.S."/>
            <person name="Tegner J."/>
            <person name="Teichmann S.A."/>
            <person name="Ueda H.R."/>
            <person name="van Nimwegen E."/>
            <person name="Verardo R."/>
            <person name="Wei C.L."/>
            <person name="Yagi K."/>
            <person name="Yamanishi H."/>
            <person name="Zabarovsky E."/>
            <person name="Zhu S."/>
            <person name="Zimmer A."/>
            <person name="Hide W."/>
            <person name="Bult C."/>
            <person name="Grimmond S.M."/>
            <person name="Teasdale R.D."/>
            <person name="Liu E.T."/>
            <person name="Brusic V."/>
            <person name="Quackenbush J."/>
            <person name="Wahlestedt C."/>
            <person name="Mattick J.S."/>
            <person name="Hume D.A."/>
            <person name="Kai C."/>
            <person name="Sasaki D."/>
            <person name="Tomaru Y."/>
            <person name="Fukuda S."/>
            <person name="Kanamori-Katayama M."/>
            <person name="Suzuki M."/>
            <person name="Aoki J."/>
            <person name="Arakawa T."/>
            <person name="Iida J."/>
            <person name="Imamura K."/>
            <person name="Itoh M."/>
            <person name="Kato T."/>
            <person name="Kawaji H."/>
            <person name="Kawagashira N."/>
            <person name="Kawashima T."/>
            <person name="Kojima M."/>
            <person name="Kondo S."/>
            <person name="Konno H."/>
            <person name="Nakano K."/>
            <person name="Ninomiya N."/>
            <person name="Nishio T."/>
            <person name="Okada M."/>
            <person name="Plessy C."/>
            <person name="Shibata K."/>
            <person name="Shiraki T."/>
            <person name="Suzuki S."/>
            <person name="Tagami M."/>
            <person name="Waki K."/>
            <person name="Watahiki A."/>
            <person name="Okamura-Oho Y."/>
            <person name="Suzuki H."/>
            <person name="Kawai J."/>
            <person name="Hayashizaki Y."/>
        </authorList>
    </citation>
    <scope>NUCLEOTIDE SEQUENCE [LARGE SCALE MRNA] (ISOFORMS 1; 2 AND 3)</scope>
    <source>
        <strain>C57BL/6J</strain>
        <tissue>Bone marrow</tissue>
        <tissue>Embryo</tissue>
        <tissue>Embryonic liver</tissue>
    </source>
</reference>
<reference key="2">
    <citation type="journal article" date="2004" name="Genome Res.">
        <title>The status, quality, and expansion of the NIH full-length cDNA project: the Mammalian Gene Collection (MGC).</title>
        <authorList>
            <consortium name="The MGC Project Team"/>
        </authorList>
    </citation>
    <scope>NUCLEOTIDE SEQUENCE [LARGE SCALE MRNA] (ISOFORM 1)</scope>
    <source>
        <strain>C57BL/6J</strain>
        <tissue>Retina</tissue>
    </source>
</reference>